<name>YFEO_ECO7I</name>
<protein>
    <recommendedName>
        <fullName evidence="1">Putative ion-transport protein YfeO</fullName>
    </recommendedName>
</protein>
<gene>
    <name evidence="1" type="primary">yfeO</name>
    <name type="ordered locus">ECIAI39_2534</name>
</gene>
<keyword id="KW-1003">Cell membrane</keyword>
<keyword id="KW-0407">Ion channel</keyword>
<keyword id="KW-0406">Ion transport</keyword>
<keyword id="KW-0472">Membrane</keyword>
<keyword id="KW-0812">Transmembrane</keyword>
<keyword id="KW-1133">Transmembrane helix</keyword>
<keyword id="KW-0813">Transport</keyword>
<organism>
    <name type="scientific">Escherichia coli O7:K1 (strain IAI39 / ExPEC)</name>
    <dbReference type="NCBI Taxonomy" id="585057"/>
    <lineage>
        <taxon>Bacteria</taxon>
        <taxon>Pseudomonadati</taxon>
        <taxon>Pseudomonadota</taxon>
        <taxon>Gammaproteobacteria</taxon>
        <taxon>Enterobacterales</taxon>
        <taxon>Enterobacteriaceae</taxon>
        <taxon>Escherichia</taxon>
    </lineage>
</organism>
<comment type="subcellular location">
    <subcellularLocation>
        <location evidence="1">Cell membrane</location>
        <topology evidence="1">Multi-pass membrane protein</topology>
    </subcellularLocation>
</comment>
<comment type="similarity">
    <text evidence="1">Belongs to the chloride channel (TC 2.A.49) family.</text>
</comment>
<accession>B7NPS5</accession>
<proteinExistence type="inferred from homology"/>
<sequence>MLHPRARTMLLLSLPAVAIGIASSLILIVVMKIASVLQNLLWLRLPGTLGIAQDSPFWIIAILTLTGIAVGLVIRFSQGHAGPDPACEPLIGAPVPPSALPGLIVALILGLAGGVSLGPEHPIMTVNIALAVAIGARLLPRVNRMEWTILASAGTIGALFGTPVAAALIFSQTLNGSSEVPLWDRLFAPLMAAAAGALTTGLFFHPHFSLPIAHYGQMEMTDILSGAIVAAIAIAAGMIAVWCLPRLHAMMHQIKNPVLMLGVGGFILGILGVIAGPVSLFKGLDEMQQMVANQAFSTSDYFLLAVIKLAALVVAAASGFRGGRIFPAVFVGVALGLMLHEHVPAVPAAITVSCAILGIVLVVTRDGWLSLFMAAVVVPNTTLLPLLCIVMLPAWLLLAGKPMMMVNRPKQQPPHDNV</sequence>
<feature type="chain" id="PRO_1000137209" description="Putative ion-transport protein YfeO">
    <location>
        <begin position="1"/>
        <end position="418"/>
    </location>
</feature>
<feature type="transmembrane region" description="Helical" evidence="1">
    <location>
        <begin position="10"/>
        <end position="30"/>
    </location>
</feature>
<feature type="transmembrane region" description="Helical" evidence="1">
    <location>
        <begin position="54"/>
        <end position="74"/>
    </location>
</feature>
<feature type="transmembrane region" description="Helical" evidence="1">
    <location>
        <begin position="99"/>
        <end position="119"/>
    </location>
</feature>
<feature type="transmembrane region" description="Helical" evidence="1">
    <location>
        <begin position="120"/>
        <end position="140"/>
    </location>
</feature>
<feature type="transmembrane region" description="Helical" evidence="1">
    <location>
        <begin position="149"/>
        <end position="169"/>
    </location>
</feature>
<feature type="transmembrane region" description="Helical" evidence="1">
    <location>
        <begin position="186"/>
        <end position="206"/>
    </location>
</feature>
<feature type="transmembrane region" description="Helical" evidence="1">
    <location>
        <begin position="223"/>
        <end position="243"/>
    </location>
</feature>
<feature type="transmembrane region" description="Helical" evidence="1">
    <location>
        <begin position="258"/>
        <end position="278"/>
    </location>
</feature>
<feature type="transmembrane region" description="Helical" evidence="1">
    <location>
        <begin position="300"/>
        <end position="320"/>
    </location>
</feature>
<feature type="transmembrane region" description="Helical" evidence="1">
    <location>
        <begin position="322"/>
        <end position="342"/>
    </location>
</feature>
<feature type="transmembrane region" description="Helical" evidence="1">
    <location>
        <begin position="343"/>
        <end position="363"/>
    </location>
</feature>
<feature type="transmembrane region" description="Helical" evidence="1">
    <location>
        <begin position="371"/>
        <end position="391"/>
    </location>
</feature>
<reference key="1">
    <citation type="journal article" date="2009" name="PLoS Genet.">
        <title>Organised genome dynamics in the Escherichia coli species results in highly diverse adaptive paths.</title>
        <authorList>
            <person name="Touchon M."/>
            <person name="Hoede C."/>
            <person name="Tenaillon O."/>
            <person name="Barbe V."/>
            <person name="Baeriswyl S."/>
            <person name="Bidet P."/>
            <person name="Bingen E."/>
            <person name="Bonacorsi S."/>
            <person name="Bouchier C."/>
            <person name="Bouvet O."/>
            <person name="Calteau A."/>
            <person name="Chiapello H."/>
            <person name="Clermont O."/>
            <person name="Cruveiller S."/>
            <person name="Danchin A."/>
            <person name="Diard M."/>
            <person name="Dossat C."/>
            <person name="Karoui M.E."/>
            <person name="Frapy E."/>
            <person name="Garry L."/>
            <person name="Ghigo J.M."/>
            <person name="Gilles A.M."/>
            <person name="Johnson J."/>
            <person name="Le Bouguenec C."/>
            <person name="Lescat M."/>
            <person name="Mangenot S."/>
            <person name="Martinez-Jehanne V."/>
            <person name="Matic I."/>
            <person name="Nassif X."/>
            <person name="Oztas S."/>
            <person name="Petit M.A."/>
            <person name="Pichon C."/>
            <person name="Rouy Z."/>
            <person name="Ruf C.S."/>
            <person name="Schneider D."/>
            <person name="Tourret J."/>
            <person name="Vacherie B."/>
            <person name="Vallenet D."/>
            <person name="Medigue C."/>
            <person name="Rocha E.P.C."/>
            <person name="Denamur E."/>
        </authorList>
    </citation>
    <scope>NUCLEOTIDE SEQUENCE [LARGE SCALE GENOMIC DNA]</scope>
    <source>
        <strain>IAI39 / ExPEC</strain>
    </source>
</reference>
<dbReference type="EMBL" id="CU928164">
    <property type="protein sequence ID" value="CAR18658.1"/>
    <property type="molecule type" value="Genomic_DNA"/>
</dbReference>
<dbReference type="RefSeq" id="WP_000903113.1">
    <property type="nucleotide sequence ID" value="NC_011750.1"/>
</dbReference>
<dbReference type="RefSeq" id="YP_002408486.1">
    <property type="nucleotide sequence ID" value="NC_011750.1"/>
</dbReference>
<dbReference type="SMR" id="B7NPS5"/>
<dbReference type="STRING" id="585057.ECIAI39_2534"/>
<dbReference type="KEGG" id="ect:ECIAI39_2534"/>
<dbReference type="PATRIC" id="fig|585057.6.peg.2638"/>
<dbReference type="HOGENOM" id="CLU_053130_0_0_6"/>
<dbReference type="Proteomes" id="UP000000749">
    <property type="component" value="Chromosome"/>
</dbReference>
<dbReference type="GO" id="GO:0005886">
    <property type="term" value="C:plasma membrane"/>
    <property type="evidence" value="ECO:0007669"/>
    <property type="project" value="UniProtKB-SubCell"/>
</dbReference>
<dbReference type="GO" id="GO:0015108">
    <property type="term" value="F:chloride transmembrane transporter activity"/>
    <property type="evidence" value="ECO:0007669"/>
    <property type="project" value="InterPro"/>
</dbReference>
<dbReference type="GO" id="GO:0005216">
    <property type="term" value="F:monoatomic ion channel activity"/>
    <property type="evidence" value="ECO:0007669"/>
    <property type="project" value="UniProtKB-UniRule"/>
</dbReference>
<dbReference type="CDD" id="cd00400">
    <property type="entry name" value="Voltage_gated_ClC"/>
    <property type="match status" value="1"/>
</dbReference>
<dbReference type="FunFam" id="1.10.3080.10:FF:000007">
    <property type="entry name" value="Putative ion-transport protein YfeO"/>
    <property type="match status" value="1"/>
</dbReference>
<dbReference type="Gene3D" id="1.10.3080.10">
    <property type="entry name" value="Clc chloride channel"/>
    <property type="match status" value="1"/>
</dbReference>
<dbReference type="HAMAP" id="MF_01115">
    <property type="entry name" value="CLC_YfeO"/>
    <property type="match status" value="1"/>
</dbReference>
<dbReference type="InterPro" id="IPR022969">
    <property type="entry name" value="Chloride_channel_YfeO"/>
</dbReference>
<dbReference type="InterPro" id="IPR014743">
    <property type="entry name" value="Cl-channel_core"/>
</dbReference>
<dbReference type="InterPro" id="IPR001807">
    <property type="entry name" value="ClC"/>
</dbReference>
<dbReference type="InterPro" id="IPR050368">
    <property type="entry name" value="ClC-type_chloride_channel"/>
</dbReference>
<dbReference type="NCBIfam" id="NF002971">
    <property type="entry name" value="PRK03655.1"/>
    <property type="match status" value="1"/>
</dbReference>
<dbReference type="PANTHER" id="PTHR43427">
    <property type="entry name" value="CHLORIDE CHANNEL PROTEIN CLC-E"/>
    <property type="match status" value="1"/>
</dbReference>
<dbReference type="PANTHER" id="PTHR43427:SF9">
    <property type="entry name" value="ION-TRANSPORT PROTEIN YFEO-RELATED"/>
    <property type="match status" value="1"/>
</dbReference>
<dbReference type="Pfam" id="PF00654">
    <property type="entry name" value="Voltage_CLC"/>
    <property type="match status" value="1"/>
</dbReference>
<dbReference type="PRINTS" id="PR00762">
    <property type="entry name" value="CLCHANNEL"/>
</dbReference>
<dbReference type="SUPFAM" id="SSF81340">
    <property type="entry name" value="Clc chloride channel"/>
    <property type="match status" value="1"/>
</dbReference>
<evidence type="ECO:0000255" key="1">
    <source>
        <dbReference type="HAMAP-Rule" id="MF_01115"/>
    </source>
</evidence>